<comment type="function">
    <text evidence="1">NDH-1 shuttles electrons from NADH, via FMN and iron-sulfur (Fe-S) centers, to quinones in the respiratory chain. The immediate electron acceptor for the enzyme in this species is believed to be a menaquinone. Couples the redox reaction to proton translocation (for every two electrons transferred, four hydrogen ions are translocated across the cytoplasmic membrane), and thus conserves the redox energy in a proton gradient.</text>
</comment>
<comment type="catalytic activity">
    <reaction evidence="1">
        <text>a quinone + NADH + 5 H(+)(in) = a quinol + NAD(+) + 4 H(+)(out)</text>
        <dbReference type="Rhea" id="RHEA:57888"/>
        <dbReference type="ChEBI" id="CHEBI:15378"/>
        <dbReference type="ChEBI" id="CHEBI:24646"/>
        <dbReference type="ChEBI" id="CHEBI:57540"/>
        <dbReference type="ChEBI" id="CHEBI:57945"/>
        <dbReference type="ChEBI" id="CHEBI:132124"/>
    </reaction>
</comment>
<comment type="cofactor">
    <cofactor evidence="1">
        <name>[4Fe-4S] cluster</name>
        <dbReference type="ChEBI" id="CHEBI:49883"/>
    </cofactor>
    <text evidence="1">Binds 1 [4Fe-4S] cluster.</text>
</comment>
<comment type="subunit">
    <text evidence="1">NDH-1 is composed of 14 different subunits. Subunits NuoB, C, D, E, F, and G constitute the peripheral sector of the complex.</text>
</comment>
<comment type="subcellular location">
    <subcellularLocation>
        <location evidence="1">Cell inner membrane</location>
        <topology evidence="1">Peripheral membrane protein</topology>
        <orientation evidence="1">Cytoplasmic side</orientation>
    </subcellularLocation>
</comment>
<comment type="similarity">
    <text evidence="1">Belongs to the complex I 20 kDa subunit family.</text>
</comment>
<keyword id="KW-0004">4Fe-4S</keyword>
<keyword id="KW-0997">Cell inner membrane</keyword>
<keyword id="KW-1003">Cell membrane</keyword>
<keyword id="KW-0408">Iron</keyword>
<keyword id="KW-0411">Iron-sulfur</keyword>
<keyword id="KW-0472">Membrane</keyword>
<keyword id="KW-0479">Metal-binding</keyword>
<keyword id="KW-0520">NAD</keyword>
<keyword id="KW-0874">Quinone</keyword>
<keyword id="KW-1278">Translocase</keyword>
<keyword id="KW-0813">Transport</keyword>
<proteinExistence type="inferred from homology"/>
<feature type="chain" id="PRO_0000376143" description="NADH-quinone oxidoreductase subunit B">
    <location>
        <begin position="1"/>
        <end position="198"/>
    </location>
</feature>
<feature type="binding site" evidence="1">
    <location>
        <position position="62"/>
    </location>
    <ligand>
        <name>[4Fe-4S] cluster</name>
        <dbReference type="ChEBI" id="CHEBI:49883"/>
    </ligand>
</feature>
<feature type="binding site" evidence="1">
    <location>
        <position position="63"/>
    </location>
    <ligand>
        <name>[4Fe-4S] cluster</name>
        <dbReference type="ChEBI" id="CHEBI:49883"/>
    </ligand>
</feature>
<feature type="binding site" evidence="1">
    <location>
        <position position="128"/>
    </location>
    <ligand>
        <name>[4Fe-4S] cluster</name>
        <dbReference type="ChEBI" id="CHEBI:49883"/>
    </ligand>
</feature>
<feature type="binding site" evidence="1">
    <location>
        <position position="158"/>
    </location>
    <ligand>
        <name>[4Fe-4S] cluster</name>
        <dbReference type="ChEBI" id="CHEBI:49883"/>
    </ligand>
</feature>
<evidence type="ECO:0000255" key="1">
    <source>
        <dbReference type="HAMAP-Rule" id="MF_01356"/>
    </source>
</evidence>
<dbReference type="EC" id="7.1.1.-" evidence="1"/>
<dbReference type="EMBL" id="CP000139">
    <property type="protein sequence ID" value="ABR39434.1"/>
    <property type="molecule type" value="Genomic_DNA"/>
</dbReference>
<dbReference type="RefSeq" id="WP_005842862.1">
    <property type="nucleotide sequence ID" value="NZ_CAXVNH010000006.1"/>
</dbReference>
<dbReference type="SMR" id="A6L170"/>
<dbReference type="STRING" id="435590.BVU_1758"/>
<dbReference type="PaxDb" id="435590-BVU_1758"/>
<dbReference type="GeneID" id="5302724"/>
<dbReference type="KEGG" id="bvu:BVU_1758"/>
<dbReference type="eggNOG" id="COG0377">
    <property type="taxonomic scope" value="Bacteria"/>
</dbReference>
<dbReference type="HOGENOM" id="CLU_055737_7_3_10"/>
<dbReference type="BioCyc" id="BVUL435590:G1G59-1846-MONOMER"/>
<dbReference type="Proteomes" id="UP000002861">
    <property type="component" value="Chromosome"/>
</dbReference>
<dbReference type="GO" id="GO:0005886">
    <property type="term" value="C:plasma membrane"/>
    <property type="evidence" value="ECO:0007669"/>
    <property type="project" value="UniProtKB-SubCell"/>
</dbReference>
<dbReference type="GO" id="GO:0045271">
    <property type="term" value="C:respiratory chain complex I"/>
    <property type="evidence" value="ECO:0007669"/>
    <property type="project" value="TreeGrafter"/>
</dbReference>
<dbReference type="GO" id="GO:0051539">
    <property type="term" value="F:4 iron, 4 sulfur cluster binding"/>
    <property type="evidence" value="ECO:0007669"/>
    <property type="project" value="UniProtKB-KW"/>
</dbReference>
<dbReference type="GO" id="GO:0005506">
    <property type="term" value="F:iron ion binding"/>
    <property type="evidence" value="ECO:0007669"/>
    <property type="project" value="UniProtKB-UniRule"/>
</dbReference>
<dbReference type="GO" id="GO:0008137">
    <property type="term" value="F:NADH dehydrogenase (ubiquinone) activity"/>
    <property type="evidence" value="ECO:0007669"/>
    <property type="project" value="InterPro"/>
</dbReference>
<dbReference type="GO" id="GO:0050136">
    <property type="term" value="F:NADH:ubiquinone reductase (non-electrogenic) activity"/>
    <property type="evidence" value="ECO:0007669"/>
    <property type="project" value="UniProtKB-UniRule"/>
</dbReference>
<dbReference type="GO" id="GO:0048038">
    <property type="term" value="F:quinone binding"/>
    <property type="evidence" value="ECO:0007669"/>
    <property type="project" value="UniProtKB-KW"/>
</dbReference>
<dbReference type="GO" id="GO:0009060">
    <property type="term" value="P:aerobic respiration"/>
    <property type="evidence" value="ECO:0007669"/>
    <property type="project" value="TreeGrafter"/>
</dbReference>
<dbReference type="GO" id="GO:0015990">
    <property type="term" value="P:electron transport coupled proton transport"/>
    <property type="evidence" value="ECO:0007669"/>
    <property type="project" value="TreeGrafter"/>
</dbReference>
<dbReference type="FunFam" id="3.40.50.12280:FF:000002">
    <property type="entry name" value="NADH-quinone oxidoreductase subunit B"/>
    <property type="match status" value="1"/>
</dbReference>
<dbReference type="Gene3D" id="3.40.50.12280">
    <property type="match status" value="1"/>
</dbReference>
<dbReference type="HAMAP" id="MF_01356">
    <property type="entry name" value="NDH1_NuoB"/>
    <property type="match status" value="1"/>
</dbReference>
<dbReference type="InterPro" id="IPR006137">
    <property type="entry name" value="NADH_UbQ_OxRdtase-like_20kDa"/>
</dbReference>
<dbReference type="InterPro" id="IPR006138">
    <property type="entry name" value="NADH_UQ_OxRdtase_20Kd_su"/>
</dbReference>
<dbReference type="NCBIfam" id="TIGR01957">
    <property type="entry name" value="nuoB_fam"/>
    <property type="match status" value="1"/>
</dbReference>
<dbReference type="NCBIfam" id="NF005012">
    <property type="entry name" value="PRK06411.1"/>
    <property type="match status" value="1"/>
</dbReference>
<dbReference type="NCBIfam" id="NF011391">
    <property type="entry name" value="PRK14816.1"/>
    <property type="match status" value="1"/>
</dbReference>
<dbReference type="PANTHER" id="PTHR11995">
    <property type="entry name" value="NADH DEHYDROGENASE"/>
    <property type="match status" value="1"/>
</dbReference>
<dbReference type="PANTHER" id="PTHR11995:SF14">
    <property type="entry name" value="NADH DEHYDROGENASE [UBIQUINONE] IRON-SULFUR PROTEIN 7, MITOCHONDRIAL"/>
    <property type="match status" value="1"/>
</dbReference>
<dbReference type="Pfam" id="PF01058">
    <property type="entry name" value="Oxidored_q6"/>
    <property type="match status" value="1"/>
</dbReference>
<dbReference type="SUPFAM" id="SSF56770">
    <property type="entry name" value="HydA/Nqo6-like"/>
    <property type="match status" value="1"/>
</dbReference>
<dbReference type="PROSITE" id="PS01150">
    <property type="entry name" value="COMPLEX1_20K"/>
    <property type="match status" value="1"/>
</dbReference>
<name>NUOB_PHOV8</name>
<accession>A6L170</accession>
<reference key="1">
    <citation type="journal article" date="2007" name="PLoS Biol.">
        <title>Evolution of symbiotic bacteria in the distal human intestine.</title>
        <authorList>
            <person name="Xu J."/>
            <person name="Mahowald M.A."/>
            <person name="Ley R.E."/>
            <person name="Lozupone C.A."/>
            <person name="Hamady M."/>
            <person name="Martens E.C."/>
            <person name="Henrissat B."/>
            <person name="Coutinho P.M."/>
            <person name="Minx P."/>
            <person name="Latreille P."/>
            <person name="Cordum H."/>
            <person name="Van Brunt A."/>
            <person name="Kim K."/>
            <person name="Fulton R.S."/>
            <person name="Fulton L.A."/>
            <person name="Clifton S.W."/>
            <person name="Wilson R.K."/>
            <person name="Knight R.D."/>
            <person name="Gordon J.I."/>
        </authorList>
    </citation>
    <scope>NUCLEOTIDE SEQUENCE [LARGE SCALE GENOMIC DNA]</scope>
    <source>
        <strain>ATCC 8482 / DSM 1447 / JCM 5826 / CCUG 4940 / NBRC 14291 / NCTC 11154</strain>
    </source>
</reference>
<sequence length="198" mass="22081">MEVKKPTIKSIPYEDFKDNEYLENMVKQLNEGGTKVLVGCLDDLINWGRSNSLWPLTFATSCCGIEFMAVGAARYDFARFGFEVARASPRQADMIMVAGTITHKMAPVLKRLYDQMADPKYVIAVGGCAISGGPFKKSYHVLNGVDKILPVDVYIPGCPPRPEALLYGMIQLQRKVKLEKFFGGVNRKENEPQNPEQA</sequence>
<organism>
    <name type="scientific">Phocaeicola vulgatus (strain ATCC 8482 / DSM 1447 / JCM 5826 / CCUG 4940 / NBRC 14291 / NCTC 11154)</name>
    <name type="common">Bacteroides vulgatus</name>
    <dbReference type="NCBI Taxonomy" id="435590"/>
    <lineage>
        <taxon>Bacteria</taxon>
        <taxon>Pseudomonadati</taxon>
        <taxon>Bacteroidota</taxon>
        <taxon>Bacteroidia</taxon>
        <taxon>Bacteroidales</taxon>
        <taxon>Bacteroidaceae</taxon>
        <taxon>Phocaeicola</taxon>
    </lineage>
</organism>
<gene>
    <name evidence="1" type="primary">nuoB</name>
    <name type="ordered locus">BVU_1758</name>
</gene>
<protein>
    <recommendedName>
        <fullName evidence="1">NADH-quinone oxidoreductase subunit B</fullName>
        <ecNumber evidence="1">7.1.1.-</ecNumber>
    </recommendedName>
    <alternativeName>
        <fullName evidence="1">NADH dehydrogenase I subunit B</fullName>
    </alternativeName>
    <alternativeName>
        <fullName evidence="1">NDH-1 subunit B</fullName>
    </alternativeName>
</protein>